<reference key="1">
    <citation type="submission" date="2006-03" db="EMBL/GenBank/DDBJ databases">
        <title>Complete sequence of chromosome of Psychrobacter cryohalolentis K5.</title>
        <authorList>
            <consortium name="US DOE Joint Genome Institute"/>
            <person name="Copeland A."/>
            <person name="Lucas S."/>
            <person name="Lapidus A."/>
            <person name="Barry K."/>
            <person name="Detter J.C."/>
            <person name="Glavina T."/>
            <person name="Hammon N."/>
            <person name="Israni S."/>
            <person name="Dalin E."/>
            <person name="Tice H."/>
            <person name="Pitluck S."/>
            <person name="Brettin T."/>
            <person name="Bruce D."/>
            <person name="Han C."/>
            <person name="Tapia R."/>
            <person name="Sims D.R."/>
            <person name="Gilna P."/>
            <person name="Schmutz J."/>
            <person name="Larimer F."/>
            <person name="Land M."/>
            <person name="Hauser L."/>
            <person name="Kyrpides N."/>
            <person name="Kim E."/>
            <person name="Richardson P."/>
        </authorList>
    </citation>
    <scope>NUCLEOTIDE SEQUENCE [LARGE SCALE GENOMIC DNA]</scope>
    <source>
        <strain>ATCC BAA-1226 / DSM 17306 / VKM B-2378 / K5</strain>
    </source>
</reference>
<accession>Q1QBY7</accession>
<gene>
    <name type="ordered locus">Pcryo_1035</name>
</gene>
<feature type="chain" id="PRO_0000316719" description="Putative phosphoenolpyruvate synthase regulatory protein">
    <location>
        <begin position="1"/>
        <end position="282"/>
    </location>
</feature>
<feature type="binding site" evidence="1">
    <location>
        <begin position="162"/>
        <end position="169"/>
    </location>
    <ligand>
        <name>ADP</name>
        <dbReference type="ChEBI" id="CHEBI:456216"/>
    </ligand>
</feature>
<evidence type="ECO:0000255" key="1">
    <source>
        <dbReference type="HAMAP-Rule" id="MF_01062"/>
    </source>
</evidence>
<evidence type="ECO:0000305" key="2"/>
<protein>
    <recommendedName>
        <fullName evidence="1">Putative phosphoenolpyruvate synthase regulatory protein</fullName>
        <shortName evidence="1">PEP synthase regulatory protein</shortName>
        <shortName evidence="1">PSRP</shortName>
        <ecNumber evidence="1">2.7.11.33</ecNumber>
        <ecNumber evidence="1">2.7.4.28</ecNumber>
    </recommendedName>
    <alternativeName>
        <fullName evidence="1">Pyruvate, water dikinase regulatory protein</fullName>
    </alternativeName>
</protein>
<keyword id="KW-0418">Kinase</keyword>
<keyword id="KW-0547">Nucleotide-binding</keyword>
<keyword id="KW-0723">Serine/threonine-protein kinase</keyword>
<keyword id="KW-0808">Transferase</keyword>
<name>PSRP_PSYCK</name>
<dbReference type="EC" id="2.7.11.33" evidence="1"/>
<dbReference type="EC" id="2.7.4.28" evidence="1"/>
<dbReference type="EMBL" id="CP000323">
    <property type="protein sequence ID" value="ABE74816.1"/>
    <property type="status" value="ALT_INIT"/>
    <property type="molecule type" value="Genomic_DNA"/>
</dbReference>
<dbReference type="RefSeq" id="WP_041753451.1">
    <property type="nucleotide sequence ID" value="NC_007969.1"/>
</dbReference>
<dbReference type="SMR" id="Q1QBY7"/>
<dbReference type="STRING" id="335284.Pcryo_1035"/>
<dbReference type="KEGG" id="pcr:Pcryo_1035"/>
<dbReference type="eggNOG" id="COG1806">
    <property type="taxonomic scope" value="Bacteria"/>
</dbReference>
<dbReference type="HOGENOM" id="CLU_046206_1_0_6"/>
<dbReference type="Proteomes" id="UP000002425">
    <property type="component" value="Chromosome"/>
</dbReference>
<dbReference type="GO" id="GO:0043531">
    <property type="term" value="F:ADP binding"/>
    <property type="evidence" value="ECO:0007669"/>
    <property type="project" value="UniProtKB-UniRule"/>
</dbReference>
<dbReference type="GO" id="GO:0005524">
    <property type="term" value="F:ATP binding"/>
    <property type="evidence" value="ECO:0007669"/>
    <property type="project" value="InterPro"/>
</dbReference>
<dbReference type="GO" id="GO:0016776">
    <property type="term" value="F:phosphotransferase activity, phosphate group as acceptor"/>
    <property type="evidence" value="ECO:0007669"/>
    <property type="project" value="UniProtKB-UniRule"/>
</dbReference>
<dbReference type="GO" id="GO:0004674">
    <property type="term" value="F:protein serine/threonine kinase activity"/>
    <property type="evidence" value="ECO:0007669"/>
    <property type="project" value="UniProtKB-UniRule"/>
</dbReference>
<dbReference type="HAMAP" id="MF_01062">
    <property type="entry name" value="PSRP"/>
    <property type="match status" value="1"/>
</dbReference>
<dbReference type="InterPro" id="IPR005177">
    <property type="entry name" value="Kinase-pyrophosphorylase"/>
</dbReference>
<dbReference type="InterPro" id="IPR026530">
    <property type="entry name" value="PSRP"/>
</dbReference>
<dbReference type="NCBIfam" id="NF003742">
    <property type="entry name" value="PRK05339.1"/>
    <property type="match status" value="1"/>
</dbReference>
<dbReference type="PANTHER" id="PTHR31756">
    <property type="entry name" value="PYRUVATE, PHOSPHATE DIKINASE REGULATORY PROTEIN 1, CHLOROPLASTIC"/>
    <property type="match status" value="1"/>
</dbReference>
<dbReference type="PANTHER" id="PTHR31756:SF3">
    <property type="entry name" value="PYRUVATE, PHOSPHATE DIKINASE REGULATORY PROTEIN 1, CHLOROPLASTIC"/>
    <property type="match status" value="1"/>
</dbReference>
<dbReference type="Pfam" id="PF03618">
    <property type="entry name" value="Kinase-PPPase"/>
    <property type="match status" value="1"/>
</dbReference>
<proteinExistence type="inferred from homology"/>
<comment type="function">
    <text evidence="1">Bifunctional serine/threonine kinase and phosphorylase involved in the regulation of the phosphoenolpyruvate synthase (PEPS) by catalyzing its phosphorylation/dephosphorylation.</text>
</comment>
<comment type="catalytic activity">
    <reaction evidence="1">
        <text>[pyruvate, water dikinase] + ADP = [pyruvate, water dikinase]-phosphate + AMP + H(+)</text>
        <dbReference type="Rhea" id="RHEA:46020"/>
        <dbReference type="Rhea" id="RHEA-COMP:11425"/>
        <dbReference type="Rhea" id="RHEA-COMP:11426"/>
        <dbReference type="ChEBI" id="CHEBI:15378"/>
        <dbReference type="ChEBI" id="CHEBI:43176"/>
        <dbReference type="ChEBI" id="CHEBI:68546"/>
        <dbReference type="ChEBI" id="CHEBI:456215"/>
        <dbReference type="ChEBI" id="CHEBI:456216"/>
        <dbReference type="EC" id="2.7.11.33"/>
    </reaction>
</comment>
<comment type="catalytic activity">
    <reaction evidence="1">
        <text>[pyruvate, water dikinase]-phosphate + phosphate + H(+) = [pyruvate, water dikinase] + diphosphate</text>
        <dbReference type="Rhea" id="RHEA:48580"/>
        <dbReference type="Rhea" id="RHEA-COMP:11425"/>
        <dbReference type="Rhea" id="RHEA-COMP:11426"/>
        <dbReference type="ChEBI" id="CHEBI:15378"/>
        <dbReference type="ChEBI" id="CHEBI:33019"/>
        <dbReference type="ChEBI" id="CHEBI:43176"/>
        <dbReference type="ChEBI" id="CHEBI:43474"/>
        <dbReference type="ChEBI" id="CHEBI:68546"/>
        <dbReference type="EC" id="2.7.4.28"/>
    </reaction>
</comment>
<comment type="similarity">
    <text evidence="1">Belongs to the pyruvate, phosphate/water dikinase regulatory protein family. PSRP subfamily.</text>
</comment>
<comment type="sequence caution" evidence="2">
    <conflict type="erroneous initiation">
        <sequence resource="EMBL-CDS" id="ABE74816"/>
    </conflict>
</comment>
<sequence length="282" mass="31554">MKALEVDNAQNIRTAFFISDGTAITAETLGRAILSQFASVPFETRVLPYVDNLERAEDAVVQINTAYQRDGLLPLVFDTIVSPEIREKINSAHSCNLDMYEGLIGRVAEETGVEPDGHSGHAHDNVDSETYKERIDAVHFALDNDDGARTRHYHAADIILIGVSRSGKTPTSLYLALQFGIRAANYPLTEEDLNDNQLPKALREHKHKLFGLIIDTDRLVKIRQERRAGSRYSSYQQCQQEQRAIQGIYTSQGIPSLDVSEMSVEEIATRILQMTGLKRRIG</sequence>
<organism>
    <name type="scientific">Psychrobacter cryohalolentis (strain ATCC BAA-1226 / DSM 17306 / VKM B-2378 / K5)</name>
    <dbReference type="NCBI Taxonomy" id="335284"/>
    <lineage>
        <taxon>Bacteria</taxon>
        <taxon>Pseudomonadati</taxon>
        <taxon>Pseudomonadota</taxon>
        <taxon>Gammaproteobacteria</taxon>
        <taxon>Moraxellales</taxon>
        <taxon>Moraxellaceae</taxon>
        <taxon>Psychrobacter</taxon>
    </lineage>
</organism>